<accession>Q03428</accession>
<evidence type="ECO:0000255" key="1">
    <source>
        <dbReference type="PROSITE-ProRule" id="PRU00145"/>
    </source>
</evidence>
<evidence type="ECO:0000255" key="2">
    <source>
        <dbReference type="PROSITE-ProRule" id="PRU00159"/>
    </source>
</evidence>
<evidence type="ECO:0000255" key="3">
    <source>
        <dbReference type="PROSITE-ProRule" id="PRU10027"/>
    </source>
</evidence>
<name>NRKB_TRYBB</name>
<dbReference type="EC" id="2.7.11.1"/>
<dbReference type="EMBL" id="L03777">
    <property type="protein sequence ID" value="AAB59253.1"/>
    <property type="molecule type" value="mRNA"/>
</dbReference>
<dbReference type="SMR" id="Q03428"/>
<dbReference type="GO" id="GO:0005524">
    <property type="term" value="F:ATP binding"/>
    <property type="evidence" value="ECO:0007669"/>
    <property type="project" value="UniProtKB-KW"/>
</dbReference>
<dbReference type="GO" id="GO:0106310">
    <property type="term" value="F:protein serine kinase activity"/>
    <property type="evidence" value="ECO:0007669"/>
    <property type="project" value="RHEA"/>
</dbReference>
<dbReference type="GO" id="GO:0004674">
    <property type="term" value="F:protein serine/threonine kinase activity"/>
    <property type="evidence" value="ECO:0007669"/>
    <property type="project" value="UniProtKB-KW"/>
</dbReference>
<dbReference type="CDD" id="cd00821">
    <property type="entry name" value="PH"/>
    <property type="match status" value="1"/>
</dbReference>
<dbReference type="CDD" id="cd08215">
    <property type="entry name" value="STKc_Nek"/>
    <property type="match status" value="1"/>
</dbReference>
<dbReference type="FunFam" id="1.10.510.10:FF:000535">
    <property type="entry name" value="Serine/threonine-protein kinase a"/>
    <property type="match status" value="1"/>
</dbReference>
<dbReference type="FunFam" id="2.30.29.30:FF:000746">
    <property type="entry name" value="Serine/threonine-protein kinase NrkA"/>
    <property type="match status" value="1"/>
</dbReference>
<dbReference type="Gene3D" id="2.30.29.30">
    <property type="entry name" value="Pleckstrin-homology domain (PH domain)/Phosphotyrosine-binding domain (PTB)"/>
    <property type="match status" value="1"/>
</dbReference>
<dbReference type="Gene3D" id="1.10.510.10">
    <property type="entry name" value="Transferase(Phosphotransferase) domain 1"/>
    <property type="match status" value="1"/>
</dbReference>
<dbReference type="InterPro" id="IPR011009">
    <property type="entry name" value="Kinase-like_dom_sf"/>
</dbReference>
<dbReference type="InterPro" id="IPR051131">
    <property type="entry name" value="NEK_Ser/Thr_kinase_NIMA"/>
</dbReference>
<dbReference type="InterPro" id="IPR011993">
    <property type="entry name" value="PH-like_dom_sf"/>
</dbReference>
<dbReference type="InterPro" id="IPR001849">
    <property type="entry name" value="PH_domain"/>
</dbReference>
<dbReference type="InterPro" id="IPR000719">
    <property type="entry name" value="Prot_kinase_dom"/>
</dbReference>
<dbReference type="InterPro" id="IPR008271">
    <property type="entry name" value="Ser/Thr_kinase_AS"/>
</dbReference>
<dbReference type="PANTHER" id="PTHR44899">
    <property type="entry name" value="CAMK FAMILY PROTEIN KINASE"/>
    <property type="match status" value="1"/>
</dbReference>
<dbReference type="PANTHER" id="PTHR44899:SF3">
    <property type="entry name" value="SERINE_THREONINE-PROTEIN KINASE NEK1"/>
    <property type="match status" value="1"/>
</dbReference>
<dbReference type="Pfam" id="PF00169">
    <property type="entry name" value="PH"/>
    <property type="match status" value="1"/>
</dbReference>
<dbReference type="Pfam" id="PF00069">
    <property type="entry name" value="Pkinase"/>
    <property type="match status" value="1"/>
</dbReference>
<dbReference type="SMART" id="SM00233">
    <property type="entry name" value="PH"/>
    <property type="match status" value="1"/>
</dbReference>
<dbReference type="SMART" id="SM00220">
    <property type="entry name" value="S_TKc"/>
    <property type="match status" value="1"/>
</dbReference>
<dbReference type="SUPFAM" id="SSF50729">
    <property type="entry name" value="PH domain-like"/>
    <property type="match status" value="1"/>
</dbReference>
<dbReference type="SUPFAM" id="SSF56112">
    <property type="entry name" value="Protein kinase-like (PK-like)"/>
    <property type="match status" value="1"/>
</dbReference>
<dbReference type="PROSITE" id="PS50003">
    <property type="entry name" value="PH_DOMAIN"/>
    <property type="match status" value="1"/>
</dbReference>
<dbReference type="PROSITE" id="PS50011">
    <property type="entry name" value="PROTEIN_KINASE_DOM"/>
    <property type="match status" value="1"/>
</dbReference>
<dbReference type="PROSITE" id="PS00108">
    <property type="entry name" value="PROTEIN_KINASE_ST"/>
    <property type="match status" value="1"/>
</dbReference>
<organism>
    <name type="scientific">Trypanosoma brucei brucei</name>
    <dbReference type="NCBI Taxonomy" id="5702"/>
    <lineage>
        <taxon>Eukaryota</taxon>
        <taxon>Discoba</taxon>
        <taxon>Euglenozoa</taxon>
        <taxon>Kinetoplastea</taxon>
        <taxon>Metakinetoplastina</taxon>
        <taxon>Trypanosomatida</taxon>
        <taxon>Trypanosomatidae</taxon>
        <taxon>Trypanosoma</taxon>
    </lineage>
</organism>
<protein>
    <recommendedName>
        <fullName>Putative serine/threonine-protein kinase B</fullName>
        <ecNumber>2.7.11.1</ecNumber>
    </recommendedName>
</protein>
<reference key="1">
    <citation type="journal article" date="1993" name="Mol. Biochem. Parasitol.">
        <title>A Trypanosoma brucei gene family encoding protein kinases with catalytic domains structurally related to Nek1 and NIMA.</title>
        <authorList>
            <person name="Gale M.J. Jr."/>
            <person name="Parsons M."/>
        </authorList>
    </citation>
    <scope>NUCLEOTIDE SEQUENCE [MRNA]</scope>
    <source>
        <strain>Isolate TREU66</strain>
    </source>
</reference>
<proteinExistence type="evidence at transcript level"/>
<feature type="chain" id="PRO_0000086448" description="Putative serine/threonine-protein kinase B">
    <location>
        <begin position="1"/>
        <end position="431"/>
    </location>
</feature>
<feature type="domain" description="Protein kinase" evidence="2">
    <location>
        <begin position="20"/>
        <end position="279"/>
    </location>
</feature>
<feature type="domain" description="PH" evidence="1">
    <location>
        <begin position="331"/>
        <end position="429"/>
    </location>
</feature>
<feature type="active site" description="Proton acceptor" evidence="2 3">
    <location>
        <position position="147"/>
    </location>
</feature>
<feature type="binding site" evidence="2">
    <location>
        <begin position="26"/>
        <end position="34"/>
    </location>
    <ligand>
        <name>ATP</name>
        <dbReference type="ChEBI" id="CHEBI:30616"/>
    </ligand>
</feature>
<feature type="binding site" evidence="2">
    <location>
        <position position="49"/>
    </location>
    <ligand>
        <name>ATP</name>
        <dbReference type="ChEBI" id="CHEBI:30616"/>
    </ligand>
</feature>
<comment type="catalytic activity">
    <reaction>
        <text>L-seryl-[protein] + ATP = O-phospho-L-seryl-[protein] + ADP + H(+)</text>
        <dbReference type="Rhea" id="RHEA:17989"/>
        <dbReference type="Rhea" id="RHEA-COMP:9863"/>
        <dbReference type="Rhea" id="RHEA-COMP:11604"/>
        <dbReference type="ChEBI" id="CHEBI:15378"/>
        <dbReference type="ChEBI" id="CHEBI:29999"/>
        <dbReference type="ChEBI" id="CHEBI:30616"/>
        <dbReference type="ChEBI" id="CHEBI:83421"/>
        <dbReference type="ChEBI" id="CHEBI:456216"/>
        <dbReference type="EC" id="2.7.11.1"/>
    </reaction>
</comment>
<comment type="catalytic activity">
    <reaction>
        <text>L-threonyl-[protein] + ATP = O-phospho-L-threonyl-[protein] + ADP + H(+)</text>
        <dbReference type="Rhea" id="RHEA:46608"/>
        <dbReference type="Rhea" id="RHEA-COMP:11060"/>
        <dbReference type="Rhea" id="RHEA-COMP:11605"/>
        <dbReference type="ChEBI" id="CHEBI:15378"/>
        <dbReference type="ChEBI" id="CHEBI:30013"/>
        <dbReference type="ChEBI" id="CHEBI:30616"/>
        <dbReference type="ChEBI" id="CHEBI:61977"/>
        <dbReference type="ChEBI" id="CHEBI:456216"/>
        <dbReference type="EC" id="2.7.11.1"/>
    </reaction>
</comment>
<comment type="similarity">
    <text evidence="2">Belongs to the protein kinase superfamily. Ser/Thr protein kinase family.</text>
</comment>
<sequence length="431" mass="48172">MSEPFSTILGTDGSGGRCKYLNKGIVGLGSYGEGYVAERVEDGSLCVAKVMDLSKMSRRDKRYAQSEIKYPTNCNHPNIIRYIEDHEENDRLLIVMEFADSGNLDEQIKPWGTGDARYFQEHEALFLFLQLCLALDYIHSHKMLHRDIKSANVLLTSTGLVKLGDFGFSHQYEDTVSGVVASTFCGTPYYLAPELWNNLRYNKKADVWSLGVLLYEIMGMKKPFSASNLKGLMSKVLAGTYAPLPDSFSSEFKRVVDGILVADPNDRPSVRENFQIPYINKGLKLFVQALKKNERILDSVKEVLVSQVSEILSSEVSPDAHRFLESQINYDVTHRGHVNKLGGGNGKSWKPRFLQIVRGQLILTDDEEGNNPKGLNLEQVQGACPVPYSTAKRDFVFALNTVGGEGMWFQAVSHGDMEMWVHAIQRGIGVA</sequence>
<keyword id="KW-0067">ATP-binding</keyword>
<keyword id="KW-0418">Kinase</keyword>
<keyword id="KW-0547">Nucleotide-binding</keyword>
<keyword id="KW-0723">Serine/threonine-protein kinase</keyword>
<keyword id="KW-0808">Transferase</keyword>
<gene>
    <name type="primary">NRKB</name>
</gene>